<proteinExistence type="inferred from homology"/>
<keyword id="KW-1185">Reference proteome</keyword>
<keyword id="KW-1277">Toxin-antitoxin system</keyword>
<gene>
    <name type="ordered locus">AF_1074</name>
</gene>
<name>Y1074_ARCFU</name>
<protein>
    <recommendedName>
        <fullName>Putative antitoxin AF_1074</fullName>
    </recommendedName>
</protein>
<organism>
    <name type="scientific">Archaeoglobus fulgidus (strain ATCC 49558 / DSM 4304 / JCM 9628 / NBRC 100126 / VC-16)</name>
    <dbReference type="NCBI Taxonomy" id="224325"/>
    <lineage>
        <taxon>Archaea</taxon>
        <taxon>Methanobacteriati</taxon>
        <taxon>Methanobacteriota</taxon>
        <taxon>Archaeoglobi</taxon>
        <taxon>Archaeoglobales</taxon>
        <taxon>Archaeoglobaceae</taxon>
        <taxon>Archaeoglobus</taxon>
    </lineage>
</organism>
<feature type="chain" id="PRO_0000156849" description="Putative antitoxin AF_1074">
    <location>
        <begin position="1"/>
        <end position="64"/>
    </location>
</feature>
<dbReference type="EMBL" id="AE000782">
    <property type="protein sequence ID" value="AAB90182.1"/>
    <property type="molecule type" value="Genomic_DNA"/>
</dbReference>
<dbReference type="PIR" id="B69384">
    <property type="entry name" value="B69384"/>
</dbReference>
<dbReference type="RefSeq" id="WP_010878573.1">
    <property type="nucleotide sequence ID" value="NC_000917.1"/>
</dbReference>
<dbReference type="SMR" id="O29189"/>
<dbReference type="STRING" id="224325.AF_1074"/>
<dbReference type="PaxDb" id="224325-AF_1074"/>
<dbReference type="EnsemblBacteria" id="AAB90182">
    <property type="protein sequence ID" value="AAB90182"/>
    <property type="gene ID" value="AF_1074"/>
</dbReference>
<dbReference type="KEGG" id="afu:AF_1074"/>
<dbReference type="eggNOG" id="arCOG03880">
    <property type="taxonomic scope" value="Archaea"/>
</dbReference>
<dbReference type="HOGENOM" id="CLU_200885_3_1_2"/>
<dbReference type="OrthoDB" id="116241at2157"/>
<dbReference type="PhylomeDB" id="O29189"/>
<dbReference type="Proteomes" id="UP000002199">
    <property type="component" value="Chromosome"/>
</dbReference>
<dbReference type="Gene3D" id="4.10.1150.10">
    <property type="entry name" value="AF2212/PG0164-like"/>
    <property type="match status" value="1"/>
</dbReference>
<dbReference type="InterPro" id="IPR008203">
    <property type="entry name" value="AF2212-like"/>
</dbReference>
<dbReference type="InterPro" id="IPR024069">
    <property type="entry name" value="AF2212-like_dom_sf"/>
</dbReference>
<dbReference type="Pfam" id="PF01954">
    <property type="entry name" value="AF2212-like"/>
    <property type="match status" value="1"/>
</dbReference>
<dbReference type="SUPFAM" id="SSF141694">
    <property type="entry name" value="AF2212/PG0164-like"/>
    <property type="match status" value="1"/>
</dbReference>
<evidence type="ECO:0000305" key="1"/>
<sequence length="64" mass="7448">MPKIIEAIYENGVFKPLQKVDLKEGERVRIKLEKVEEVVDEVFGILKGKDTLKALRELEEWGFC</sequence>
<comment type="function">
    <text evidence="1">Possibly the antitoxin component of a type II toxin-antitoxin (TA) system.</text>
</comment>
<comment type="similarity">
    <text evidence="1">Belongs to the UPF0165 family.</text>
</comment>
<reference key="1">
    <citation type="journal article" date="1997" name="Nature">
        <title>The complete genome sequence of the hyperthermophilic, sulphate-reducing archaeon Archaeoglobus fulgidus.</title>
        <authorList>
            <person name="Klenk H.-P."/>
            <person name="Clayton R.A."/>
            <person name="Tomb J.-F."/>
            <person name="White O."/>
            <person name="Nelson K.E."/>
            <person name="Ketchum K.A."/>
            <person name="Dodson R.J."/>
            <person name="Gwinn M.L."/>
            <person name="Hickey E.K."/>
            <person name="Peterson J.D."/>
            <person name="Richardson D.L."/>
            <person name="Kerlavage A.R."/>
            <person name="Graham D.E."/>
            <person name="Kyrpides N.C."/>
            <person name="Fleischmann R.D."/>
            <person name="Quackenbush J."/>
            <person name="Lee N.H."/>
            <person name="Sutton G.G."/>
            <person name="Gill S.R."/>
            <person name="Kirkness E.F."/>
            <person name="Dougherty B.A."/>
            <person name="McKenney K."/>
            <person name="Adams M.D."/>
            <person name="Loftus B.J."/>
            <person name="Peterson S.N."/>
            <person name="Reich C.I."/>
            <person name="McNeil L.K."/>
            <person name="Badger J.H."/>
            <person name="Glodek A."/>
            <person name="Zhou L."/>
            <person name="Overbeek R."/>
            <person name="Gocayne J.D."/>
            <person name="Weidman J.F."/>
            <person name="McDonald L.A."/>
            <person name="Utterback T.R."/>
            <person name="Cotton M.D."/>
            <person name="Spriggs T."/>
            <person name="Artiach P."/>
            <person name="Kaine B.P."/>
            <person name="Sykes S.M."/>
            <person name="Sadow P.W."/>
            <person name="D'Andrea K.P."/>
            <person name="Bowman C."/>
            <person name="Fujii C."/>
            <person name="Garland S.A."/>
            <person name="Mason T.M."/>
            <person name="Olsen G.J."/>
            <person name="Fraser C.M."/>
            <person name="Smith H.O."/>
            <person name="Woese C.R."/>
            <person name="Venter J.C."/>
        </authorList>
    </citation>
    <scope>NUCLEOTIDE SEQUENCE [LARGE SCALE GENOMIC DNA]</scope>
    <source>
        <strain>ATCC 49558 / DSM 4304 / JCM 9628 / NBRC 100126 / VC-16</strain>
    </source>
</reference>
<accession>O29189</accession>